<proteinExistence type="inferred from homology"/>
<feature type="chain" id="PRO_0000399704" description="Altered inheritance of mitochondria protein 32">
    <location>
        <begin position="1"/>
        <end position="311"/>
    </location>
</feature>
<sequence>MLRITVKTLQQRASFHHSFKHISVPDLHTRAQNDQTNCYCQEINARLPSKTDPLDPHIKLPHRTPNYNKHVLLLSPGDRFAQPWKVAWNHNLDTNTNRPYNAISKLRSHLGGSPGILINAAHLQNEFIPRPKQHDEWLYFFVIPDMKLYVIKETDIEEFASFLDEGAIQAPKLSFQDYLSGKAKASQQVHEVHHRKLTRFQGETFLRDWNLVCGHYKRDAKCGEMGPDIIAAFQDEKLFPENNLALISHIGGHIFAGNVIFYKLFGREKMQNKLDSLWFGKVYPHNLKLLCENLENGKIIDEMYRGGISMN</sequence>
<name>AIM32_YEAS6</name>
<protein>
    <recommendedName>
        <fullName>Altered inheritance of mitochondria protein 32</fullName>
    </recommendedName>
</protein>
<accession>B5VP80</accession>
<evidence type="ECO:0000305" key="1"/>
<dbReference type="EMBL" id="ABSV01001772">
    <property type="protein sequence ID" value="EDZ70264.1"/>
    <property type="molecule type" value="Genomic_DNA"/>
</dbReference>
<dbReference type="OrthoDB" id="35083at4893"/>
<dbReference type="Proteomes" id="UP000008988">
    <property type="component" value="Unassembled WGS sequence"/>
</dbReference>
<dbReference type="CDD" id="cd03062">
    <property type="entry name" value="TRX_Fd_Sucrase"/>
    <property type="match status" value="1"/>
</dbReference>
<dbReference type="InterPro" id="IPR009737">
    <property type="entry name" value="Aim32/Apd1-like"/>
</dbReference>
<dbReference type="InterPro" id="IPR036249">
    <property type="entry name" value="Thioredoxin-like_sf"/>
</dbReference>
<dbReference type="PANTHER" id="PTHR31902">
    <property type="entry name" value="ACTIN PATCHES DISTAL PROTEIN 1"/>
    <property type="match status" value="1"/>
</dbReference>
<dbReference type="PANTHER" id="PTHR31902:SF7">
    <property type="entry name" value="ALTERED INHERITANCE OF MITOCHONDRIA PROTEIN 32"/>
    <property type="match status" value="1"/>
</dbReference>
<dbReference type="Pfam" id="PF06999">
    <property type="entry name" value="Suc_Fer-like"/>
    <property type="match status" value="1"/>
</dbReference>
<dbReference type="SUPFAM" id="SSF52833">
    <property type="entry name" value="Thioredoxin-like"/>
    <property type="match status" value="1"/>
</dbReference>
<gene>
    <name type="primary">AIM32</name>
    <name type="ORF">AWRI1631_130860</name>
</gene>
<comment type="similarity">
    <text evidence="1">Belongs to the AIM32 family.</text>
</comment>
<organism>
    <name type="scientific">Saccharomyces cerevisiae (strain AWRI1631)</name>
    <name type="common">Baker's yeast</name>
    <dbReference type="NCBI Taxonomy" id="545124"/>
    <lineage>
        <taxon>Eukaryota</taxon>
        <taxon>Fungi</taxon>
        <taxon>Dikarya</taxon>
        <taxon>Ascomycota</taxon>
        <taxon>Saccharomycotina</taxon>
        <taxon>Saccharomycetes</taxon>
        <taxon>Saccharomycetales</taxon>
        <taxon>Saccharomycetaceae</taxon>
        <taxon>Saccharomyces</taxon>
    </lineage>
</organism>
<reference key="1">
    <citation type="journal article" date="2008" name="FEMS Yeast Res.">
        <title>Comparative genome analysis of a Saccharomyces cerevisiae wine strain.</title>
        <authorList>
            <person name="Borneman A.R."/>
            <person name="Forgan A.H."/>
            <person name="Pretorius I.S."/>
            <person name="Chambers P.J."/>
        </authorList>
    </citation>
    <scope>NUCLEOTIDE SEQUENCE [LARGE SCALE GENOMIC DNA]</scope>
    <source>
        <strain>AWRI1631</strain>
    </source>
</reference>